<evidence type="ECO:0000255" key="1">
    <source>
        <dbReference type="HAMAP-Rule" id="MF_00361"/>
    </source>
</evidence>
<dbReference type="EC" id="2.7.1.23" evidence="1"/>
<dbReference type="EMBL" id="AE006470">
    <property type="protein sequence ID" value="AAM71333.1"/>
    <property type="molecule type" value="Genomic_DNA"/>
</dbReference>
<dbReference type="RefSeq" id="NP_660991.1">
    <property type="nucleotide sequence ID" value="NC_002932.3"/>
</dbReference>
<dbReference type="RefSeq" id="WP_010931779.1">
    <property type="nucleotide sequence ID" value="NC_002932.3"/>
</dbReference>
<dbReference type="SMR" id="Q8KG83"/>
<dbReference type="STRING" id="194439.CT0085"/>
<dbReference type="EnsemblBacteria" id="AAM71333">
    <property type="protein sequence ID" value="AAM71333"/>
    <property type="gene ID" value="CT0085"/>
</dbReference>
<dbReference type="KEGG" id="cte:CT0085"/>
<dbReference type="PATRIC" id="fig|194439.7.peg.85"/>
<dbReference type="eggNOG" id="COG0061">
    <property type="taxonomic scope" value="Bacteria"/>
</dbReference>
<dbReference type="HOGENOM" id="CLU_008831_0_3_10"/>
<dbReference type="OrthoDB" id="9774737at2"/>
<dbReference type="Proteomes" id="UP000001007">
    <property type="component" value="Chromosome"/>
</dbReference>
<dbReference type="GO" id="GO:0005737">
    <property type="term" value="C:cytoplasm"/>
    <property type="evidence" value="ECO:0007669"/>
    <property type="project" value="UniProtKB-SubCell"/>
</dbReference>
<dbReference type="GO" id="GO:0005524">
    <property type="term" value="F:ATP binding"/>
    <property type="evidence" value="ECO:0007669"/>
    <property type="project" value="UniProtKB-KW"/>
</dbReference>
<dbReference type="GO" id="GO:0046872">
    <property type="term" value="F:metal ion binding"/>
    <property type="evidence" value="ECO:0007669"/>
    <property type="project" value="UniProtKB-UniRule"/>
</dbReference>
<dbReference type="GO" id="GO:0051287">
    <property type="term" value="F:NAD binding"/>
    <property type="evidence" value="ECO:0007669"/>
    <property type="project" value="UniProtKB-ARBA"/>
</dbReference>
<dbReference type="GO" id="GO:0003951">
    <property type="term" value="F:NAD+ kinase activity"/>
    <property type="evidence" value="ECO:0007669"/>
    <property type="project" value="UniProtKB-UniRule"/>
</dbReference>
<dbReference type="GO" id="GO:0019674">
    <property type="term" value="P:NAD metabolic process"/>
    <property type="evidence" value="ECO:0007669"/>
    <property type="project" value="InterPro"/>
</dbReference>
<dbReference type="GO" id="GO:0006741">
    <property type="term" value="P:NADP biosynthetic process"/>
    <property type="evidence" value="ECO:0007669"/>
    <property type="project" value="UniProtKB-UniRule"/>
</dbReference>
<dbReference type="Gene3D" id="3.40.50.10330">
    <property type="entry name" value="Probable inorganic polyphosphate/atp-NAD kinase, domain 1"/>
    <property type="match status" value="1"/>
</dbReference>
<dbReference type="Gene3D" id="2.60.200.30">
    <property type="entry name" value="Probable inorganic polyphosphate/atp-NAD kinase, domain 2"/>
    <property type="match status" value="1"/>
</dbReference>
<dbReference type="HAMAP" id="MF_00361">
    <property type="entry name" value="NAD_kinase"/>
    <property type="match status" value="1"/>
</dbReference>
<dbReference type="InterPro" id="IPR017438">
    <property type="entry name" value="ATP-NAD_kinase_N"/>
</dbReference>
<dbReference type="InterPro" id="IPR017437">
    <property type="entry name" value="ATP-NAD_kinase_PpnK-typ_C"/>
</dbReference>
<dbReference type="InterPro" id="IPR016064">
    <property type="entry name" value="NAD/diacylglycerol_kinase_sf"/>
</dbReference>
<dbReference type="InterPro" id="IPR002504">
    <property type="entry name" value="NADK"/>
</dbReference>
<dbReference type="PANTHER" id="PTHR20275">
    <property type="entry name" value="NAD KINASE"/>
    <property type="match status" value="1"/>
</dbReference>
<dbReference type="PANTHER" id="PTHR20275:SF0">
    <property type="entry name" value="NAD KINASE"/>
    <property type="match status" value="1"/>
</dbReference>
<dbReference type="Pfam" id="PF01513">
    <property type="entry name" value="NAD_kinase"/>
    <property type="match status" value="1"/>
</dbReference>
<dbReference type="Pfam" id="PF20143">
    <property type="entry name" value="NAD_kinase_C"/>
    <property type="match status" value="1"/>
</dbReference>
<dbReference type="SUPFAM" id="SSF111331">
    <property type="entry name" value="NAD kinase/diacylglycerol kinase-like"/>
    <property type="match status" value="1"/>
</dbReference>
<gene>
    <name evidence="1" type="primary">nadK</name>
    <name type="ordered locus">CT0085</name>
</gene>
<feature type="chain" id="PRO_0000120610" description="NAD kinase">
    <location>
        <begin position="1"/>
        <end position="283"/>
    </location>
</feature>
<feature type="active site" description="Proton acceptor" evidence="1">
    <location>
        <position position="66"/>
    </location>
</feature>
<feature type="binding site" evidence="1">
    <location>
        <begin position="66"/>
        <end position="67"/>
    </location>
    <ligand>
        <name>NAD(+)</name>
        <dbReference type="ChEBI" id="CHEBI:57540"/>
    </ligand>
</feature>
<feature type="binding site" evidence="1">
    <location>
        <begin position="134"/>
        <end position="135"/>
    </location>
    <ligand>
        <name>NAD(+)</name>
        <dbReference type="ChEBI" id="CHEBI:57540"/>
    </ligand>
</feature>
<feature type="binding site" evidence="1">
    <location>
        <position position="145"/>
    </location>
    <ligand>
        <name>NAD(+)</name>
        <dbReference type="ChEBI" id="CHEBI:57540"/>
    </ligand>
</feature>
<feature type="binding site" evidence="1">
    <location>
        <position position="163"/>
    </location>
    <ligand>
        <name>NAD(+)</name>
        <dbReference type="ChEBI" id="CHEBI:57540"/>
    </ligand>
</feature>
<feature type="binding site" evidence="1">
    <location>
        <position position="165"/>
    </location>
    <ligand>
        <name>NAD(+)</name>
        <dbReference type="ChEBI" id="CHEBI:57540"/>
    </ligand>
</feature>
<feature type="binding site" evidence="1">
    <location>
        <begin position="176"/>
        <end position="181"/>
    </location>
    <ligand>
        <name>NAD(+)</name>
        <dbReference type="ChEBI" id="CHEBI:57540"/>
    </ligand>
</feature>
<proteinExistence type="inferred from homology"/>
<sequence length="283" mass="30989">MKFAIFVNTTREKALELARELTAWLDARSIDYVFDPQSAKALGCGKWEEKADLSQHCDAFVALGGDGTLLLASHYSRSKPVVGINVGDLGFLTEFSPDEMWVAMDHLVSGNYSIHTRSQLEATLESGESLTSLNDVIFEKGSAARRLPAFTILLDDEMLGSYRADGIIIATSTGSTAYSMSAGGPIIAPKSNVFVITPICPHMLTVRPIVISDDKTIKISVDSQSGEFPLKMDGIQKKLLAPGEVVTVKKSPHHINLVANEKRNYCEILRKKLLWSHEHPTGE</sequence>
<organism>
    <name type="scientific">Chlorobaculum tepidum (strain ATCC 49652 / DSM 12025 / NBRC 103806 / TLS)</name>
    <name type="common">Chlorobium tepidum</name>
    <dbReference type="NCBI Taxonomy" id="194439"/>
    <lineage>
        <taxon>Bacteria</taxon>
        <taxon>Pseudomonadati</taxon>
        <taxon>Chlorobiota</taxon>
        <taxon>Chlorobiia</taxon>
        <taxon>Chlorobiales</taxon>
        <taxon>Chlorobiaceae</taxon>
        <taxon>Chlorobaculum</taxon>
    </lineage>
</organism>
<comment type="function">
    <text evidence="1">Involved in the regulation of the intracellular balance of NAD and NADP, and is a key enzyme in the biosynthesis of NADP. Catalyzes specifically the phosphorylation on 2'-hydroxyl of the adenosine moiety of NAD to yield NADP.</text>
</comment>
<comment type="catalytic activity">
    <reaction evidence="1">
        <text>NAD(+) + ATP = ADP + NADP(+) + H(+)</text>
        <dbReference type="Rhea" id="RHEA:18629"/>
        <dbReference type="ChEBI" id="CHEBI:15378"/>
        <dbReference type="ChEBI" id="CHEBI:30616"/>
        <dbReference type="ChEBI" id="CHEBI:57540"/>
        <dbReference type="ChEBI" id="CHEBI:58349"/>
        <dbReference type="ChEBI" id="CHEBI:456216"/>
        <dbReference type="EC" id="2.7.1.23"/>
    </reaction>
</comment>
<comment type="cofactor">
    <cofactor evidence="1">
        <name>a divalent metal cation</name>
        <dbReference type="ChEBI" id="CHEBI:60240"/>
    </cofactor>
</comment>
<comment type="subcellular location">
    <subcellularLocation>
        <location evidence="1">Cytoplasm</location>
    </subcellularLocation>
</comment>
<comment type="similarity">
    <text evidence="1">Belongs to the NAD kinase family.</text>
</comment>
<reference key="1">
    <citation type="journal article" date="2002" name="Proc. Natl. Acad. Sci. U.S.A.">
        <title>The complete genome sequence of Chlorobium tepidum TLS, a photosynthetic, anaerobic, green-sulfur bacterium.</title>
        <authorList>
            <person name="Eisen J.A."/>
            <person name="Nelson K.E."/>
            <person name="Paulsen I.T."/>
            <person name="Heidelberg J.F."/>
            <person name="Wu M."/>
            <person name="Dodson R.J."/>
            <person name="DeBoy R.T."/>
            <person name="Gwinn M.L."/>
            <person name="Nelson W.C."/>
            <person name="Haft D.H."/>
            <person name="Hickey E.K."/>
            <person name="Peterson J.D."/>
            <person name="Durkin A.S."/>
            <person name="Kolonay J.F."/>
            <person name="Yang F."/>
            <person name="Holt I.E."/>
            <person name="Umayam L.A."/>
            <person name="Mason T.M."/>
            <person name="Brenner M."/>
            <person name="Shea T.P."/>
            <person name="Parksey D.S."/>
            <person name="Nierman W.C."/>
            <person name="Feldblyum T.V."/>
            <person name="Hansen C.L."/>
            <person name="Craven M.B."/>
            <person name="Radune D."/>
            <person name="Vamathevan J.J."/>
            <person name="Khouri H.M."/>
            <person name="White O."/>
            <person name="Gruber T.M."/>
            <person name="Ketchum K.A."/>
            <person name="Venter J.C."/>
            <person name="Tettelin H."/>
            <person name="Bryant D.A."/>
            <person name="Fraser C.M."/>
        </authorList>
    </citation>
    <scope>NUCLEOTIDE SEQUENCE [LARGE SCALE GENOMIC DNA]</scope>
    <source>
        <strain>ATCC 49652 / DSM 12025 / NBRC 103806 / TLS</strain>
    </source>
</reference>
<accession>Q8KG83</accession>
<name>NADK_CHLTE</name>
<keyword id="KW-0067">ATP-binding</keyword>
<keyword id="KW-0963">Cytoplasm</keyword>
<keyword id="KW-0418">Kinase</keyword>
<keyword id="KW-0520">NAD</keyword>
<keyword id="KW-0521">NADP</keyword>
<keyword id="KW-0547">Nucleotide-binding</keyword>
<keyword id="KW-1185">Reference proteome</keyword>
<keyword id="KW-0808">Transferase</keyword>
<protein>
    <recommendedName>
        <fullName evidence="1">NAD kinase</fullName>
        <ecNumber evidence="1">2.7.1.23</ecNumber>
    </recommendedName>
    <alternativeName>
        <fullName evidence="1">ATP-dependent NAD kinase</fullName>
    </alternativeName>
</protein>